<accession>Q5UQV9</accession>
<dbReference type="EMBL" id="AY653733">
    <property type="protein sequence ID" value="AAV50647.1"/>
    <property type="molecule type" value="Genomic_DNA"/>
</dbReference>
<dbReference type="SMR" id="Q5UQV9"/>
<dbReference type="KEGG" id="vg:9924999"/>
<dbReference type="OrthoDB" id="19867at10239"/>
<dbReference type="Proteomes" id="UP000001134">
    <property type="component" value="Genome"/>
</dbReference>
<reference key="1">
    <citation type="journal article" date="2004" name="Science">
        <title>The 1.2-megabase genome sequence of Mimivirus.</title>
        <authorList>
            <person name="Raoult D."/>
            <person name="Audic S."/>
            <person name="Robert C."/>
            <person name="Abergel C."/>
            <person name="Renesto P."/>
            <person name="Ogata H."/>
            <person name="La Scola B."/>
            <person name="Susan M."/>
            <person name="Claverie J.-M."/>
        </authorList>
    </citation>
    <scope>NUCLEOTIDE SEQUENCE [LARGE SCALE GENOMIC DNA]</scope>
    <source>
        <strain>Rowbotham-Bradford</strain>
    </source>
</reference>
<organismHost>
    <name type="scientific">Acanthamoeba polyphaga</name>
    <name type="common">Amoeba</name>
    <dbReference type="NCBI Taxonomy" id="5757"/>
</organismHost>
<organism>
    <name type="scientific">Acanthamoeba polyphaga mimivirus</name>
    <name type="common">APMV</name>
    <dbReference type="NCBI Taxonomy" id="212035"/>
    <lineage>
        <taxon>Viruses</taxon>
        <taxon>Varidnaviria</taxon>
        <taxon>Bamfordvirae</taxon>
        <taxon>Nucleocytoviricota</taxon>
        <taxon>Megaviricetes</taxon>
        <taxon>Imitervirales</taxon>
        <taxon>Mimiviridae</taxon>
        <taxon>Megamimivirinae</taxon>
        <taxon>Mimivirus</taxon>
        <taxon>Mimivirus bradfordmassiliense</taxon>
    </lineage>
</organism>
<proteinExistence type="predicted"/>
<evidence type="ECO:0000256" key="1">
    <source>
        <dbReference type="SAM" id="MobiDB-lite"/>
    </source>
</evidence>
<gene>
    <name type="ordered locus">MIMI_R378</name>
</gene>
<protein>
    <recommendedName>
        <fullName>Uncharacterized protein R378</fullName>
    </recommendedName>
</protein>
<name>YR378_MIMIV</name>
<feature type="chain" id="PRO_0000247397" description="Uncharacterized protein R378">
    <location>
        <begin position="1"/>
        <end position="195"/>
    </location>
</feature>
<feature type="region of interest" description="Disordered" evidence="1">
    <location>
        <begin position="143"/>
        <end position="195"/>
    </location>
</feature>
<feature type="compositionally biased region" description="Low complexity" evidence="1">
    <location>
        <begin position="148"/>
        <end position="159"/>
    </location>
</feature>
<keyword id="KW-1185">Reference proteome</keyword>
<sequence length="195" mass="23024">MTNYKKSKYSRDDRKHIAESIENLKNDEDYVAIFEILMDDESNSYTENSNGVFLNLSTVSDTTLDRISKYLNKINTQKNKHIEVDTDIIPTLINNKNERTYKLSNYEKNIIKQRNLRKAVDDDVDYEEFRFSNKKNIKSVKPNKLIETINTNRTNNTDNKSTKSKKQTETKKSLRTNKIVKQPINKSKKNIREEY</sequence>